<sequence length="284" mass="32954">MDGIKKKMIAMKLEKENAMERAVQYEELLKKKEEEREKRESEIAELNNKMKQAQIDCDEAQETLQEQMNKLEETDKRATNAEAEVAAMTRRIRLLEEDLEVSSSRLTETLTKLEEASKTAEESERGRKDLEIRSIADDERLNQLEDQQKEAKYIAEDADRKYDEAARKLAIAEVDFERAEARLEAAESKIVELEEELRVVGNNMKALEISEQESAQREESYEETIRDLTERLKAAEQRATEAERQVSKLQNEVDHLEDDLLAEKERYKALSGELDQTFAELTGY</sequence>
<accession>P42637</accession>
<proteinExistence type="evidence at transcript level"/>
<dbReference type="EMBL" id="M27512">
    <property type="protein sequence ID" value="AAA03011.1"/>
    <property type="molecule type" value="mRNA"/>
</dbReference>
<dbReference type="PIR" id="A60607">
    <property type="entry name" value="A60607"/>
</dbReference>
<dbReference type="RefSeq" id="XP_018650430.1">
    <property type="nucleotide sequence ID" value="XM_018796193.1"/>
</dbReference>
<dbReference type="SMR" id="P42637"/>
<dbReference type="FunCoup" id="P42637">
    <property type="interactions" value="8"/>
</dbReference>
<dbReference type="STRING" id="6183.P42637"/>
<dbReference type="EnsemblMetazoa" id="Smp_340760.3">
    <property type="protein sequence ID" value="Smp_340760.3"/>
    <property type="gene ID" value="Smp_340760"/>
</dbReference>
<dbReference type="GeneID" id="8350309"/>
<dbReference type="KEGG" id="smm:Smp_044010.1"/>
<dbReference type="WBParaSite" id="Smp_340760.1">
    <property type="protein sequence ID" value="Smp_340760.1"/>
    <property type="gene ID" value="Smp_340760"/>
</dbReference>
<dbReference type="CTD" id="8350309"/>
<dbReference type="eggNOG" id="KOG1003">
    <property type="taxonomic scope" value="Eukaryota"/>
</dbReference>
<dbReference type="HOGENOM" id="CLU_055027_0_2_1"/>
<dbReference type="InParanoid" id="P42637"/>
<dbReference type="OMA" id="EEMDHAP"/>
<dbReference type="OrthoDB" id="128924at2759"/>
<dbReference type="PhylomeDB" id="P42637"/>
<dbReference type="Proteomes" id="UP000008854">
    <property type="component" value="Unassembled WGS sequence"/>
</dbReference>
<dbReference type="FunFam" id="1.20.5.170:FF:000001">
    <property type="entry name" value="Tropomyosin alpha-1 chain isoform 1"/>
    <property type="match status" value="1"/>
</dbReference>
<dbReference type="FunFam" id="1.20.5.340:FF:000001">
    <property type="entry name" value="Tropomyosin alpha-1 chain isoform 2"/>
    <property type="match status" value="1"/>
</dbReference>
<dbReference type="Gene3D" id="1.20.5.170">
    <property type="match status" value="2"/>
</dbReference>
<dbReference type="Gene3D" id="1.20.5.340">
    <property type="match status" value="1"/>
</dbReference>
<dbReference type="InterPro" id="IPR000533">
    <property type="entry name" value="Tropomyosin"/>
</dbReference>
<dbReference type="PANTHER" id="PTHR19269">
    <property type="entry name" value="TROPOMYOSIN"/>
    <property type="match status" value="1"/>
</dbReference>
<dbReference type="Pfam" id="PF00261">
    <property type="entry name" value="Tropomyosin"/>
    <property type="match status" value="1"/>
</dbReference>
<dbReference type="PRINTS" id="PR00194">
    <property type="entry name" value="TROPOMYOSIN"/>
</dbReference>
<dbReference type="SUPFAM" id="SSF57997">
    <property type="entry name" value="Tropomyosin"/>
    <property type="match status" value="1"/>
</dbReference>
<dbReference type="PROSITE" id="PS00326">
    <property type="entry name" value="TROPOMYOSIN"/>
    <property type="match status" value="1"/>
</dbReference>
<feature type="chain" id="PRO_0000205656" description="Tropomyosin-1">
    <location>
        <begin position="1"/>
        <end position="284"/>
    </location>
</feature>
<feature type="region of interest" description="Disordered" evidence="2">
    <location>
        <begin position="111"/>
        <end position="131"/>
    </location>
</feature>
<feature type="coiled-coil region">
    <location>
        <begin position="1"/>
        <end position="284"/>
    </location>
</feature>
<reference key="1">
    <citation type="journal article" date="1989" name="Exp. Parasitol.">
        <title>Schistosoma mansoni tropomyosin: cDNA characterization, sequence, expression, and gene product localization.</title>
        <authorList>
            <person name="Xu H."/>
            <person name="Miller S."/>
            <person name="van Kuelen H."/>
            <person name="Wawrzynski M.R."/>
            <person name="Rekosh D.M."/>
            <person name="Loverde P.T."/>
        </authorList>
    </citation>
    <scope>NUCLEOTIDE SEQUENCE [MRNA]</scope>
</reference>
<organism>
    <name type="scientific">Schistosoma mansoni</name>
    <name type="common">Blood fluke</name>
    <dbReference type="NCBI Taxonomy" id="6183"/>
    <lineage>
        <taxon>Eukaryota</taxon>
        <taxon>Metazoa</taxon>
        <taxon>Spiralia</taxon>
        <taxon>Lophotrochozoa</taxon>
        <taxon>Platyhelminthes</taxon>
        <taxon>Trematoda</taxon>
        <taxon>Digenea</taxon>
        <taxon>Strigeidida</taxon>
        <taxon>Schistosomatoidea</taxon>
        <taxon>Schistosomatidae</taxon>
        <taxon>Schistosoma</taxon>
    </lineage>
</organism>
<keyword id="KW-0175">Coiled coil</keyword>
<keyword id="KW-1185">Reference proteome</keyword>
<keyword id="KW-0677">Repeat</keyword>
<name>TPM1_SCHMA</name>
<evidence type="ECO:0000250" key="1"/>
<evidence type="ECO:0000256" key="2">
    <source>
        <dbReference type="SAM" id="MobiDB-lite"/>
    </source>
</evidence>
<evidence type="ECO:0000305" key="3"/>
<protein>
    <recommendedName>
        <fullName>Tropomyosin-1</fullName>
    </recommendedName>
    <alternativeName>
        <fullName>Polypeptide 49</fullName>
    </alternativeName>
    <alternativeName>
        <fullName>Tropomyosin I</fullName>
        <shortName>SmTMI</shortName>
        <shortName>TMI</shortName>
    </alternativeName>
</protein>
<comment type="function">
    <text>Tropomyosin, in association with the troponin complex, plays a central role in the calcium dependent regulation of muscle contraction.</text>
</comment>
<comment type="subunit">
    <text evidence="1">Homodimer.</text>
</comment>
<comment type="developmental stage">
    <text>Expressed at much higher levels in the adult worm stage as compared to the cercariae and the egg stages.</text>
</comment>
<comment type="domain">
    <text>The molecule is in a coiled coil structure that is formed by 2 polypeptide chains. The sequence exhibits a prominent seven-residues periodicity.</text>
</comment>
<comment type="similarity">
    <text evidence="3">Belongs to the tropomyosin family.</text>
</comment>